<feature type="chain" id="PRO_1000044851" description="Chaperone protein HscA homolog">
    <location>
        <begin position="1"/>
        <end position="622"/>
    </location>
</feature>
<organism>
    <name type="scientific">Burkholderia pseudomallei (strain 668)</name>
    <dbReference type="NCBI Taxonomy" id="320373"/>
    <lineage>
        <taxon>Bacteria</taxon>
        <taxon>Pseudomonadati</taxon>
        <taxon>Pseudomonadota</taxon>
        <taxon>Betaproteobacteria</taxon>
        <taxon>Burkholderiales</taxon>
        <taxon>Burkholderiaceae</taxon>
        <taxon>Burkholderia</taxon>
        <taxon>pseudomallei group</taxon>
    </lineage>
</organism>
<sequence>MALLQISEPGMAPAPHQRRLAVGIDLGTTNSLVAAVRNSIPEALPDDAGRVLLPSVVRYLDKGGRRIGHAAKEEAAIDPRNTIVSVKRFMGRGKAEVEGAANAPYEFVDAPGMVQIRTVDGVKSPVEVSAEILATLRQRAEDTLGDDLVGAVITVPAYFDDAQRQATKDAARLAGLNVLRLLNEPTAAAIAYGLDNGAEGLYAVYDLGGGTFDLSILKLTKGVFEVLAAGGDSALGGDDFDHLLFEHVLAQAGLEAAALAPEDVRLLLDRVRGAKEALSAAPQARVDVKLSTGEKLAQTITRDTFAALVEPLVQRTLGPTRKALRDAQVSAADIKGVVLVGGATRMPVIRDAVAKYFGQPPLVNLDPDQVVALGAAIQADLLAGNRSGGDDWLLLDVIPLSLGVETMGGLVEKIIPRNSTIPVARAQEFTTFKDGQTAMAIHVVQGERELVSDCRSLARFELRGIPPMTAGAARIRVTYQVDADGLLSVFAREQHSGVEASVVVKPSYGLGDDDIARMLEDSFKTAEVDMRARALREAQVEAQRLVEATEAALVADGDLLDASERATVDALVASLRALAPGDDADAIDAATKALAEGTDEFAARRMDKSIKRALAGRKLDEI</sequence>
<gene>
    <name evidence="1" type="primary">hscA</name>
    <name type="ordered locus">BURPS668_2595</name>
</gene>
<protein>
    <recommendedName>
        <fullName evidence="1">Chaperone protein HscA homolog</fullName>
    </recommendedName>
</protein>
<proteinExistence type="inferred from homology"/>
<evidence type="ECO:0000255" key="1">
    <source>
        <dbReference type="HAMAP-Rule" id="MF_00679"/>
    </source>
</evidence>
<comment type="function">
    <text evidence="1">Chaperone involved in the maturation of iron-sulfur cluster-containing proteins. Has a low intrinsic ATPase activity which is markedly stimulated by HscB.</text>
</comment>
<comment type="similarity">
    <text evidence="1">Belongs to the heat shock protein 70 family.</text>
</comment>
<name>HSCA_BURP6</name>
<accession>A3NBA0</accession>
<keyword id="KW-0067">ATP-binding</keyword>
<keyword id="KW-0143">Chaperone</keyword>
<keyword id="KW-0547">Nucleotide-binding</keyword>
<reference key="1">
    <citation type="journal article" date="2010" name="Genome Biol. Evol.">
        <title>Continuing evolution of Burkholderia mallei through genome reduction and large-scale rearrangements.</title>
        <authorList>
            <person name="Losada L."/>
            <person name="Ronning C.M."/>
            <person name="DeShazer D."/>
            <person name="Woods D."/>
            <person name="Fedorova N."/>
            <person name="Kim H.S."/>
            <person name="Shabalina S.A."/>
            <person name="Pearson T.R."/>
            <person name="Brinkac L."/>
            <person name="Tan P."/>
            <person name="Nandi T."/>
            <person name="Crabtree J."/>
            <person name="Badger J."/>
            <person name="Beckstrom-Sternberg S."/>
            <person name="Saqib M."/>
            <person name="Schutzer S.E."/>
            <person name="Keim P."/>
            <person name="Nierman W.C."/>
        </authorList>
    </citation>
    <scope>NUCLEOTIDE SEQUENCE [LARGE SCALE GENOMIC DNA]</scope>
    <source>
        <strain>668</strain>
    </source>
</reference>
<dbReference type="EMBL" id="CP000570">
    <property type="protein sequence ID" value="ABN82386.1"/>
    <property type="molecule type" value="Genomic_DNA"/>
</dbReference>
<dbReference type="RefSeq" id="WP_004533931.1">
    <property type="nucleotide sequence ID" value="NC_009074.1"/>
</dbReference>
<dbReference type="SMR" id="A3NBA0"/>
<dbReference type="GeneID" id="93060842"/>
<dbReference type="KEGG" id="bpd:BURPS668_2595"/>
<dbReference type="HOGENOM" id="CLU_005965_2_3_4"/>
<dbReference type="GO" id="GO:0005524">
    <property type="term" value="F:ATP binding"/>
    <property type="evidence" value="ECO:0007669"/>
    <property type="project" value="UniProtKB-KW"/>
</dbReference>
<dbReference type="GO" id="GO:0016887">
    <property type="term" value="F:ATP hydrolysis activity"/>
    <property type="evidence" value="ECO:0007669"/>
    <property type="project" value="UniProtKB-UniRule"/>
</dbReference>
<dbReference type="GO" id="GO:0140662">
    <property type="term" value="F:ATP-dependent protein folding chaperone"/>
    <property type="evidence" value="ECO:0007669"/>
    <property type="project" value="InterPro"/>
</dbReference>
<dbReference type="GO" id="GO:0051082">
    <property type="term" value="F:unfolded protein binding"/>
    <property type="evidence" value="ECO:0007669"/>
    <property type="project" value="InterPro"/>
</dbReference>
<dbReference type="GO" id="GO:0016226">
    <property type="term" value="P:iron-sulfur cluster assembly"/>
    <property type="evidence" value="ECO:0007669"/>
    <property type="project" value="InterPro"/>
</dbReference>
<dbReference type="FunFam" id="3.30.420.40:FF:000046">
    <property type="entry name" value="Chaperone protein HscA"/>
    <property type="match status" value="1"/>
</dbReference>
<dbReference type="FunFam" id="2.60.34.10:FF:000005">
    <property type="entry name" value="Chaperone protein HscA homolog"/>
    <property type="match status" value="1"/>
</dbReference>
<dbReference type="Gene3D" id="1.20.1270.10">
    <property type="match status" value="1"/>
</dbReference>
<dbReference type="Gene3D" id="3.30.420.40">
    <property type="match status" value="2"/>
</dbReference>
<dbReference type="Gene3D" id="3.90.640.10">
    <property type="entry name" value="Actin, Chain A, domain 4"/>
    <property type="match status" value="1"/>
</dbReference>
<dbReference type="Gene3D" id="2.60.34.10">
    <property type="entry name" value="Substrate Binding Domain Of DNAk, Chain A, domain 1"/>
    <property type="match status" value="1"/>
</dbReference>
<dbReference type="HAMAP" id="MF_00679">
    <property type="entry name" value="HscA"/>
    <property type="match status" value="1"/>
</dbReference>
<dbReference type="InterPro" id="IPR043129">
    <property type="entry name" value="ATPase_NBD"/>
</dbReference>
<dbReference type="InterPro" id="IPR018181">
    <property type="entry name" value="Heat_shock_70_CS"/>
</dbReference>
<dbReference type="InterPro" id="IPR029048">
    <property type="entry name" value="HSP70_C_sf"/>
</dbReference>
<dbReference type="InterPro" id="IPR029047">
    <property type="entry name" value="HSP70_peptide-bd_sf"/>
</dbReference>
<dbReference type="InterPro" id="IPR013126">
    <property type="entry name" value="Hsp_70_fam"/>
</dbReference>
<dbReference type="InterPro" id="IPR010236">
    <property type="entry name" value="ISC_FeS_clus_asmbl_HscA"/>
</dbReference>
<dbReference type="NCBIfam" id="TIGR01991">
    <property type="entry name" value="HscA"/>
    <property type="match status" value="1"/>
</dbReference>
<dbReference type="NCBIfam" id="NF003520">
    <property type="entry name" value="PRK05183.1"/>
    <property type="match status" value="1"/>
</dbReference>
<dbReference type="PANTHER" id="PTHR19375">
    <property type="entry name" value="HEAT SHOCK PROTEIN 70KDA"/>
    <property type="match status" value="1"/>
</dbReference>
<dbReference type="Pfam" id="PF00012">
    <property type="entry name" value="HSP70"/>
    <property type="match status" value="1"/>
</dbReference>
<dbReference type="PRINTS" id="PR00301">
    <property type="entry name" value="HEATSHOCK70"/>
</dbReference>
<dbReference type="SUPFAM" id="SSF53067">
    <property type="entry name" value="Actin-like ATPase domain"/>
    <property type="match status" value="2"/>
</dbReference>
<dbReference type="SUPFAM" id="SSF100934">
    <property type="entry name" value="Heat shock protein 70kD (HSP70), C-terminal subdomain"/>
    <property type="match status" value="1"/>
</dbReference>
<dbReference type="SUPFAM" id="SSF100920">
    <property type="entry name" value="Heat shock protein 70kD (HSP70), peptide-binding domain"/>
    <property type="match status" value="1"/>
</dbReference>
<dbReference type="PROSITE" id="PS00297">
    <property type="entry name" value="HSP70_1"/>
    <property type="match status" value="1"/>
</dbReference>
<dbReference type="PROSITE" id="PS00329">
    <property type="entry name" value="HSP70_2"/>
    <property type="match status" value="1"/>
</dbReference>
<dbReference type="PROSITE" id="PS01036">
    <property type="entry name" value="HSP70_3"/>
    <property type="match status" value="1"/>
</dbReference>